<name>HIS1_PROMM</name>
<sequence length="217" mass="23198">MITVALAKGALLNDSVARFQSAGLDFSAVLDPGNRQLMVPSHCGRARALLVRNGDVPVYVAYGQAQLGVVGYDVLREHQMPVAQLVDLGFGGCRMAVAVKASSGYQHAADLPPHCRVASKFTHCAREFFDALDLPVELVHLTGSVELGPLTGIAEAIVDLVATGRTLRDNGLVAIEELFQSSARLIGHPLALRLDRGDLQLIVEAMRIQESLPKNPA</sequence>
<feature type="chain" id="PRO_0000151923" description="ATP phosphoribosyltransferase">
    <location>
        <begin position="1"/>
        <end position="217"/>
    </location>
</feature>
<evidence type="ECO:0000255" key="1">
    <source>
        <dbReference type="HAMAP-Rule" id="MF_01018"/>
    </source>
</evidence>
<reference key="1">
    <citation type="journal article" date="2003" name="Nature">
        <title>Genome divergence in two Prochlorococcus ecotypes reflects oceanic niche differentiation.</title>
        <authorList>
            <person name="Rocap G."/>
            <person name="Larimer F.W."/>
            <person name="Lamerdin J.E."/>
            <person name="Malfatti S."/>
            <person name="Chain P."/>
            <person name="Ahlgren N.A."/>
            <person name="Arellano A."/>
            <person name="Coleman M."/>
            <person name="Hauser L."/>
            <person name="Hess W.R."/>
            <person name="Johnson Z.I."/>
            <person name="Land M.L."/>
            <person name="Lindell D."/>
            <person name="Post A.F."/>
            <person name="Regala W."/>
            <person name="Shah M."/>
            <person name="Shaw S.L."/>
            <person name="Steglich C."/>
            <person name="Sullivan M.B."/>
            <person name="Ting C.S."/>
            <person name="Tolonen A."/>
            <person name="Webb E.A."/>
            <person name="Zinser E.R."/>
            <person name="Chisholm S.W."/>
        </authorList>
    </citation>
    <scope>NUCLEOTIDE SEQUENCE [LARGE SCALE GENOMIC DNA]</scope>
    <source>
        <strain>MIT 9313</strain>
    </source>
</reference>
<proteinExistence type="inferred from homology"/>
<comment type="function">
    <text evidence="1">Catalyzes the condensation of ATP and 5-phosphoribose 1-diphosphate to form N'-(5'-phosphoribosyl)-ATP (PR-ATP). Has a crucial role in the pathway because the rate of histidine biosynthesis seems to be controlled primarily by regulation of HisG enzymatic activity.</text>
</comment>
<comment type="catalytic activity">
    <reaction evidence="1">
        <text>1-(5-phospho-beta-D-ribosyl)-ATP + diphosphate = 5-phospho-alpha-D-ribose 1-diphosphate + ATP</text>
        <dbReference type="Rhea" id="RHEA:18473"/>
        <dbReference type="ChEBI" id="CHEBI:30616"/>
        <dbReference type="ChEBI" id="CHEBI:33019"/>
        <dbReference type="ChEBI" id="CHEBI:58017"/>
        <dbReference type="ChEBI" id="CHEBI:73183"/>
        <dbReference type="EC" id="2.4.2.17"/>
    </reaction>
</comment>
<comment type="pathway">
    <text evidence="1">Amino-acid biosynthesis; L-histidine biosynthesis; L-histidine from 5-phospho-alpha-D-ribose 1-diphosphate: step 1/9.</text>
</comment>
<comment type="subunit">
    <text evidence="1">Heteromultimer composed of HisG and HisZ subunits.</text>
</comment>
<comment type="subcellular location">
    <subcellularLocation>
        <location evidence="1">Cytoplasm</location>
    </subcellularLocation>
</comment>
<comment type="domain">
    <text>Lacks the C-terminal regulatory region which is replaced by HisZ.</text>
</comment>
<comment type="similarity">
    <text evidence="1">Belongs to the ATP phosphoribosyltransferase family. Short subfamily.</text>
</comment>
<organism>
    <name type="scientific">Prochlorococcus marinus (strain MIT 9313)</name>
    <dbReference type="NCBI Taxonomy" id="74547"/>
    <lineage>
        <taxon>Bacteria</taxon>
        <taxon>Bacillati</taxon>
        <taxon>Cyanobacteriota</taxon>
        <taxon>Cyanophyceae</taxon>
        <taxon>Synechococcales</taxon>
        <taxon>Prochlorococcaceae</taxon>
        <taxon>Prochlorococcus</taxon>
    </lineage>
</organism>
<protein>
    <recommendedName>
        <fullName evidence="1">ATP phosphoribosyltransferase</fullName>
        <shortName evidence="1">ATP-PRT</shortName>
        <shortName evidence="1">ATP-PRTase</shortName>
        <ecNumber evidence="1">2.4.2.17</ecNumber>
    </recommendedName>
</protein>
<keyword id="KW-0028">Amino-acid biosynthesis</keyword>
<keyword id="KW-0067">ATP-binding</keyword>
<keyword id="KW-0963">Cytoplasm</keyword>
<keyword id="KW-0328">Glycosyltransferase</keyword>
<keyword id="KW-0368">Histidine biosynthesis</keyword>
<keyword id="KW-0547">Nucleotide-binding</keyword>
<keyword id="KW-1185">Reference proteome</keyword>
<keyword id="KW-0808">Transferase</keyword>
<accession>Q7V6G9</accession>
<gene>
    <name evidence="1" type="primary">hisG</name>
    <name type="ordered locus">PMT_1193</name>
</gene>
<dbReference type="EC" id="2.4.2.17" evidence="1"/>
<dbReference type="EMBL" id="BX548175">
    <property type="protein sequence ID" value="CAE21368.1"/>
    <property type="molecule type" value="Genomic_DNA"/>
</dbReference>
<dbReference type="RefSeq" id="WP_011130564.1">
    <property type="nucleotide sequence ID" value="NC_005071.1"/>
</dbReference>
<dbReference type="SMR" id="Q7V6G9"/>
<dbReference type="KEGG" id="pmt:PMT_1193"/>
<dbReference type="eggNOG" id="COG0040">
    <property type="taxonomic scope" value="Bacteria"/>
</dbReference>
<dbReference type="HOGENOM" id="CLU_038115_2_0_3"/>
<dbReference type="OrthoDB" id="9801867at2"/>
<dbReference type="UniPathway" id="UPA00031">
    <property type="reaction ID" value="UER00006"/>
</dbReference>
<dbReference type="Proteomes" id="UP000001423">
    <property type="component" value="Chromosome"/>
</dbReference>
<dbReference type="GO" id="GO:0005737">
    <property type="term" value="C:cytoplasm"/>
    <property type="evidence" value="ECO:0007669"/>
    <property type="project" value="UniProtKB-SubCell"/>
</dbReference>
<dbReference type="GO" id="GO:0005524">
    <property type="term" value="F:ATP binding"/>
    <property type="evidence" value="ECO:0007669"/>
    <property type="project" value="UniProtKB-KW"/>
</dbReference>
<dbReference type="GO" id="GO:0003879">
    <property type="term" value="F:ATP phosphoribosyltransferase activity"/>
    <property type="evidence" value="ECO:0007669"/>
    <property type="project" value="UniProtKB-UniRule"/>
</dbReference>
<dbReference type="GO" id="GO:0000105">
    <property type="term" value="P:L-histidine biosynthetic process"/>
    <property type="evidence" value="ECO:0007669"/>
    <property type="project" value="UniProtKB-UniRule"/>
</dbReference>
<dbReference type="CDD" id="cd13595">
    <property type="entry name" value="PBP2_HisGs"/>
    <property type="match status" value="1"/>
</dbReference>
<dbReference type="FunFam" id="3.40.190.10:FF:000008">
    <property type="entry name" value="ATP phosphoribosyltransferase"/>
    <property type="match status" value="1"/>
</dbReference>
<dbReference type="Gene3D" id="3.40.190.10">
    <property type="entry name" value="Periplasmic binding protein-like II"/>
    <property type="match status" value="2"/>
</dbReference>
<dbReference type="HAMAP" id="MF_01018">
    <property type="entry name" value="HisG_Short"/>
    <property type="match status" value="1"/>
</dbReference>
<dbReference type="InterPro" id="IPR013820">
    <property type="entry name" value="ATP_PRibTrfase_cat"/>
</dbReference>
<dbReference type="InterPro" id="IPR018198">
    <property type="entry name" value="ATP_PRibTrfase_CS"/>
</dbReference>
<dbReference type="InterPro" id="IPR001348">
    <property type="entry name" value="ATP_PRibTrfase_HisG"/>
</dbReference>
<dbReference type="InterPro" id="IPR024893">
    <property type="entry name" value="ATP_PRibTrfase_HisG_short"/>
</dbReference>
<dbReference type="NCBIfam" id="TIGR00070">
    <property type="entry name" value="hisG"/>
    <property type="match status" value="1"/>
</dbReference>
<dbReference type="PANTHER" id="PTHR21403:SF8">
    <property type="entry name" value="ATP PHOSPHORIBOSYLTRANSFERASE"/>
    <property type="match status" value="1"/>
</dbReference>
<dbReference type="PANTHER" id="PTHR21403">
    <property type="entry name" value="ATP PHOSPHORIBOSYLTRANSFERASE ATP-PRTASE"/>
    <property type="match status" value="1"/>
</dbReference>
<dbReference type="Pfam" id="PF01634">
    <property type="entry name" value="HisG"/>
    <property type="match status" value="1"/>
</dbReference>
<dbReference type="SUPFAM" id="SSF53850">
    <property type="entry name" value="Periplasmic binding protein-like II"/>
    <property type="match status" value="1"/>
</dbReference>
<dbReference type="PROSITE" id="PS01316">
    <property type="entry name" value="ATP_P_PHORIBOSYLTR"/>
    <property type="match status" value="1"/>
</dbReference>